<dbReference type="EMBL" id="BC074289">
    <property type="protein sequence ID" value="AAH74289.1"/>
    <property type="molecule type" value="mRNA"/>
</dbReference>
<dbReference type="RefSeq" id="NP_001086174.1">
    <property type="nucleotide sequence ID" value="NM_001092705.1"/>
</dbReference>
<dbReference type="SMR" id="Q6GM04"/>
<dbReference type="GlyCosmos" id="Q6GM04">
    <property type="glycosylation" value="3 sites, No reported glycans"/>
</dbReference>
<dbReference type="GeneID" id="444603"/>
<dbReference type="KEGG" id="xla:444603"/>
<dbReference type="AGR" id="Xenbase:XB-GENE-17339952"/>
<dbReference type="CTD" id="444603"/>
<dbReference type="Xenbase" id="XB-GENE-17339952">
    <property type="gene designation" value="ttyh1.S"/>
</dbReference>
<dbReference type="OrthoDB" id="187568at2759"/>
<dbReference type="Proteomes" id="UP000186698">
    <property type="component" value="Chromosome 7S"/>
</dbReference>
<dbReference type="Bgee" id="444603">
    <property type="expression patterns" value="Expressed in brain and 18 other cell types or tissues"/>
</dbReference>
<dbReference type="GO" id="GO:0034707">
    <property type="term" value="C:chloride channel complex"/>
    <property type="evidence" value="ECO:0007669"/>
    <property type="project" value="UniProtKB-KW"/>
</dbReference>
<dbReference type="GO" id="GO:0005886">
    <property type="term" value="C:plasma membrane"/>
    <property type="evidence" value="ECO:0000250"/>
    <property type="project" value="UniProtKB"/>
</dbReference>
<dbReference type="GO" id="GO:0030868">
    <property type="term" value="C:smooth endoplasmic reticulum membrane"/>
    <property type="evidence" value="ECO:0000318"/>
    <property type="project" value="GO_Central"/>
</dbReference>
<dbReference type="GO" id="GO:0005229">
    <property type="term" value="F:intracellularly calcium-gated chloride channel activity"/>
    <property type="evidence" value="ECO:0000318"/>
    <property type="project" value="GO_Central"/>
</dbReference>
<dbReference type="GO" id="GO:0072320">
    <property type="term" value="F:volume-sensitive chloride channel activity"/>
    <property type="evidence" value="ECO:0000250"/>
    <property type="project" value="UniProtKB"/>
</dbReference>
<dbReference type="GO" id="GO:0015813">
    <property type="term" value="P:L-glutamate transmembrane transport"/>
    <property type="evidence" value="ECO:0000250"/>
    <property type="project" value="UniProtKB"/>
</dbReference>
<dbReference type="CDD" id="cd07912">
    <property type="entry name" value="Tweety_N"/>
    <property type="match status" value="1"/>
</dbReference>
<dbReference type="InterPro" id="IPR006990">
    <property type="entry name" value="Tweety"/>
</dbReference>
<dbReference type="PANTHER" id="PTHR12424:SF5">
    <property type="entry name" value="PROTEIN TWEETY HOMOLOG 1"/>
    <property type="match status" value="1"/>
</dbReference>
<dbReference type="PANTHER" id="PTHR12424">
    <property type="entry name" value="TWEETY-RELATED"/>
    <property type="match status" value="1"/>
</dbReference>
<dbReference type="Pfam" id="PF04906">
    <property type="entry name" value="Tweety"/>
    <property type="match status" value="1"/>
</dbReference>
<accession>Q6GM04</accession>
<feature type="chain" id="PRO_0000312244" description="Protein tweety homolog 1-B">
    <location>
        <begin position="1"/>
        <end position="451"/>
    </location>
</feature>
<feature type="topological domain" description="Extracellular" evidence="2">
    <location>
        <begin position="1"/>
        <end position="43"/>
    </location>
</feature>
<feature type="transmembrane region" description="Helical; Name=1" evidence="3">
    <location>
        <begin position="44"/>
        <end position="64"/>
    </location>
</feature>
<feature type="topological domain" description="Cytoplasmic" evidence="2">
    <location>
        <begin position="65"/>
        <end position="86"/>
    </location>
</feature>
<feature type="transmembrane region" description="Helical; Name=2" evidence="3">
    <location>
        <begin position="87"/>
        <end position="107"/>
    </location>
</feature>
<feature type="topological domain" description="Extracellular" evidence="2">
    <location>
        <begin position="108"/>
        <end position="214"/>
    </location>
</feature>
<feature type="transmembrane region" description="Helical; Name=3" evidence="3">
    <location>
        <begin position="215"/>
        <end position="235"/>
    </location>
</feature>
<feature type="topological domain" description="Cytoplasmic" evidence="2">
    <location>
        <begin position="236"/>
        <end position="240"/>
    </location>
</feature>
<feature type="transmembrane region" description="Helical; Name=4" evidence="3">
    <location>
        <begin position="241"/>
        <end position="261"/>
    </location>
</feature>
<feature type="topological domain" description="Extracellular" evidence="2">
    <location>
        <begin position="262"/>
        <end position="390"/>
    </location>
</feature>
<feature type="transmembrane region" description="Helical; Name=5" evidence="3">
    <location>
        <begin position="391"/>
        <end position="411"/>
    </location>
</feature>
<feature type="topological domain" description="Cytoplasmic" evidence="2">
    <location>
        <begin position="412"/>
        <end position="451"/>
    </location>
</feature>
<feature type="site" description="Essential for the formation of the channel-pore" evidence="1">
    <location>
        <position position="163"/>
    </location>
</feature>
<feature type="glycosylation site" description="N-linked (GlcNAc...) asparagine" evidence="3">
    <location>
        <position position="128"/>
    </location>
</feature>
<feature type="glycosylation site" description="N-linked (GlcNAc...) asparagine" evidence="3">
    <location>
        <position position="284"/>
    </location>
</feature>
<feature type="glycosylation site" description="N-linked (GlcNAc...) asparagine" evidence="3">
    <location>
        <position position="355"/>
    </location>
</feature>
<feature type="disulfide bond" evidence="2">
    <location>
        <begin position="275"/>
        <end position="385"/>
    </location>
</feature>
<feature type="disulfide bond" evidence="2">
    <location>
        <begin position="303"/>
        <end position="370"/>
    </location>
</feature>
<reference key="1">
    <citation type="submission" date="2004-06" db="EMBL/GenBank/DDBJ databases">
        <authorList>
            <consortium name="NIH - Xenopus Gene Collection (XGC) project"/>
        </authorList>
    </citation>
    <scope>NUCLEOTIDE SEQUENCE [LARGE SCALE MRNA]</scope>
    <source>
        <tissue>Eye</tissue>
    </source>
</reference>
<proteinExistence type="evidence at transcript level"/>
<comment type="function">
    <text evidence="1">May act as a calcium-independent, swelling-dependent volume-regulated anion channel (VRAC-swell) which plays a pivotal role in the process of regulatory volume decrease (RVD) in the brain through the efflux of anions like chloride and organic osmolytes like glutamate.</text>
</comment>
<comment type="catalytic activity">
    <reaction evidence="1">
        <text>chloride(in) = chloride(out)</text>
        <dbReference type="Rhea" id="RHEA:29823"/>
        <dbReference type="ChEBI" id="CHEBI:17996"/>
    </reaction>
</comment>
<comment type="catalytic activity">
    <reaction evidence="1">
        <text>L-glutamate(out) = L-glutamate(in)</text>
        <dbReference type="Rhea" id="RHEA:66336"/>
        <dbReference type="ChEBI" id="CHEBI:29985"/>
    </reaction>
    <physiologicalReaction direction="right-to-left" evidence="1">
        <dbReference type="Rhea" id="RHEA:66338"/>
    </physiologicalReaction>
</comment>
<comment type="subunit">
    <text evidence="1 2">Homotetramer; disulfide-linked. Homodimer.</text>
</comment>
<comment type="subcellular location">
    <subcellularLocation>
        <location evidence="1">Cell membrane</location>
        <topology evidence="3">Multi-pass membrane protein</topology>
    </subcellularLocation>
</comment>
<comment type="similarity">
    <text evidence="4">Belongs to the tweety family.</text>
</comment>
<evidence type="ECO:0000250" key="1">
    <source>
        <dbReference type="UniProtKB" id="Q9D3A9"/>
    </source>
</evidence>
<evidence type="ECO:0000250" key="2">
    <source>
        <dbReference type="UniProtKB" id="Q9H313"/>
    </source>
</evidence>
<evidence type="ECO:0000255" key="3"/>
<evidence type="ECO:0000305" key="4"/>
<keyword id="KW-1003">Cell membrane</keyword>
<keyword id="KW-0868">Chloride</keyword>
<keyword id="KW-0869">Chloride channel</keyword>
<keyword id="KW-1015">Disulfide bond</keyword>
<keyword id="KW-0325">Glycoprotein</keyword>
<keyword id="KW-0407">Ion channel</keyword>
<keyword id="KW-0406">Ion transport</keyword>
<keyword id="KW-0472">Membrane</keyword>
<keyword id="KW-1185">Reference proteome</keyword>
<keyword id="KW-0812">Transmembrane</keyword>
<keyword id="KW-1133">Transmembrane helix</keyword>
<keyword id="KW-0813">Transport</keyword>
<gene>
    <name type="primary">ttyh1-b</name>
</gene>
<protein>
    <recommendedName>
        <fullName>Protein tweety homolog 1-B</fullName>
    </recommendedName>
    <alternativeName>
        <fullName evidence="1">Volume-regulated anion channel subunit ttyh1-b</fullName>
    </alternativeName>
</protein>
<sequence length="451" mass="51166">MSTSHGYRASWWTYILHQVPHTNFQFEVVDNQFAPQEWSYQQALLFLASIAGLCLAISLVLICVYLIKFCCCASQEDDDSKSHRVCCVTWSCVAAVIICCAGIGIGFYGNSETNDGVYQVTYSLMNANHTLTSINLLVSDTVELLSSVVKSDLTQLEEIFSTRTEFVVMIRNTRRQVESVAQQLTEISSFFWKGAELNPSALAEQVNFIEDYRWLAYILLLLLDLIICLFTLLSLAKQIKWLVIVMTVVSFFVLLLSWGSMGLEMATAVGLSDFCSDPDAYVMNQTQMITNINPDILQYYISCNQDVTNPFRQRLTMSQRALSNIHSQLHGLEREAVPQFPTAERNVLVVQGMLNTTEGNFHHLVALLNCRGLHKDYVDALKGLCYDGMEGILFLLLFSFLSALSFTAAVCSLPRAWKRFRNRDLDYDDMDEDDPFNPQESKRFVQWQSSI</sequence>
<name>TTY1B_XENLA</name>
<organism>
    <name type="scientific">Xenopus laevis</name>
    <name type="common">African clawed frog</name>
    <dbReference type="NCBI Taxonomy" id="8355"/>
    <lineage>
        <taxon>Eukaryota</taxon>
        <taxon>Metazoa</taxon>
        <taxon>Chordata</taxon>
        <taxon>Craniata</taxon>
        <taxon>Vertebrata</taxon>
        <taxon>Euteleostomi</taxon>
        <taxon>Amphibia</taxon>
        <taxon>Batrachia</taxon>
        <taxon>Anura</taxon>
        <taxon>Pipoidea</taxon>
        <taxon>Pipidae</taxon>
        <taxon>Xenopodinae</taxon>
        <taxon>Xenopus</taxon>
        <taxon>Xenopus</taxon>
    </lineage>
</organism>